<protein>
    <recommendedName>
        <fullName evidence="1">Large ribosomal subunit protein bL19</fullName>
    </recommendedName>
    <alternativeName>
        <fullName evidence="2">50S ribosomal protein L19</fullName>
    </alternativeName>
</protein>
<evidence type="ECO:0000255" key="1">
    <source>
        <dbReference type="HAMAP-Rule" id="MF_00402"/>
    </source>
</evidence>
<evidence type="ECO:0000305" key="2"/>
<sequence length="130" mass="14490">MNIIQQYEAREIERLSGVRAVPEFIAGDTVRVGVRVVEGTRERVQSFEGVVIARSNKGLNSNFTVRKISNGEGVERVFPLYAPSIASIEVVRRGKVRRAKLYYLRGRSGKSARIAERPRDLPKADSMAAS</sequence>
<keyword id="KW-1185">Reference proteome</keyword>
<keyword id="KW-0687">Ribonucleoprotein</keyword>
<keyword id="KW-0689">Ribosomal protein</keyword>
<gene>
    <name evidence="1" type="primary">rplS</name>
    <name type="ordered locus">GOX0194</name>
</gene>
<reference key="1">
    <citation type="journal article" date="2005" name="Nat. Biotechnol.">
        <title>Complete genome sequence of the acetic acid bacterium Gluconobacter oxydans.</title>
        <authorList>
            <person name="Prust C."/>
            <person name="Hoffmeister M."/>
            <person name="Liesegang H."/>
            <person name="Wiezer A."/>
            <person name="Fricke W.F."/>
            <person name="Ehrenreich A."/>
            <person name="Gottschalk G."/>
            <person name="Deppenmeier U."/>
        </authorList>
    </citation>
    <scope>NUCLEOTIDE SEQUENCE [LARGE SCALE GENOMIC DNA]</scope>
    <source>
        <strain>621H</strain>
    </source>
</reference>
<accession>Q5FUG2</accession>
<dbReference type="EMBL" id="CP000009">
    <property type="protein sequence ID" value="AAW59984.1"/>
    <property type="molecule type" value="Genomic_DNA"/>
</dbReference>
<dbReference type="RefSeq" id="WP_011251787.1">
    <property type="nucleotide sequence ID" value="NC_006677.1"/>
</dbReference>
<dbReference type="SMR" id="Q5FUG2"/>
<dbReference type="STRING" id="290633.GOX0194"/>
<dbReference type="KEGG" id="gox:GOX0194"/>
<dbReference type="eggNOG" id="COG0335">
    <property type="taxonomic scope" value="Bacteria"/>
</dbReference>
<dbReference type="HOGENOM" id="CLU_103507_1_0_5"/>
<dbReference type="Proteomes" id="UP000006375">
    <property type="component" value="Chromosome"/>
</dbReference>
<dbReference type="GO" id="GO:0022625">
    <property type="term" value="C:cytosolic large ribosomal subunit"/>
    <property type="evidence" value="ECO:0007669"/>
    <property type="project" value="TreeGrafter"/>
</dbReference>
<dbReference type="GO" id="GO:0003735">
    <property type="term" value="F:structural constituent of ribosome"/>
    <property type="evidence" value="ECO:0007669"/>
    <property type="project" value="InterPro"/>
</dbReference>
<dbReference type="GO" id="GO:0006412">
    <property type="term" value="P:translation"/>
    <property type="evidence" value="ECO:0007669"/>
    <property type="project" value="UniProtKB-UniRule"/>
</dbReference>
<dbReference type="FunFam" id="2.30.30.790:FF:000001">
    <property type="entry name" value="50S ribosomal protein L19"/>
    <property type="match status" value="1"/>
</dbReference>
<dbReference type="Gene3D" id="2.30.30.790">
    <property type="match status" value="1"/>
</dbReference>
<dbReference type="HAMAP" id="MF_00402">
    <property type="entry name" value="Ribosomal_bL19"/>
    <property type="match status" value="1"/>
</dbReference>
<dbReference type="InterPro" id="IPR001857">
    <property type="entry name" value="Ribosomal_bL19"/>
</dbReference>
<dbReference type="InterPro" id="IPR018257">
    <property type="entry name" value="Ribosomal_bL19_CS"/>
</dbReference>
<dbReference type="InterPro" id="IPR038657">
    <property type="entry name" value="Ribosomal_bL19_sf"/>
</dbReference>
<dbReference type="InterPro" id="IPR008991">
    <property type="entry name" value="Translation_prot_SH3-like_sf"/>
</dbReference>
<dbReference type="NCBIfam" id="TIGR01024">
    <property type="entry name" value="rplS_bact"/>
    <property type="match status" value="1"/>
</dbReference>
<dbReference type="PANTHER" id="PTHR15680:SF9">
    <property type="entry name" value="LARGE RIBOSOMAL SUBUNIT PROTEIN BL19M"/>
    <property type="match status" value="1"/>
</dbReference>
<dbReference type="PANTHER" id="PTHR15680">
    <property type="entry name" value="RIBOSOMAL PROTEIN L19"/>
    <property type="match status" value="1"/>
</dbReference>
<dbReference type="Pfam" id="PF01245">
    <property type="entry name" value="Ribosomal_L19"/>
    <property type="match status" value="1"/>
</dbReference>
<dbReference type="PIRSF" id="PIRSF002191">
    <property type="entry name" value="Ribosomal_L19"/>
    <property type="match status" value="1"/>
</dbReference>
<dbReference type="PRINTS" id="PR00061">
    <property type="entry name" value="RIBOSOMALL19"/>
</dbReference>
<dbReference type="SUPFAM" id="SSF50104">
    <property type="entry name" value="Translation proteins SH3-like domain"/>
    <property type="match status" value="1"/>
</dbReference>
<dbReference type="PROSITE" id="PS01015">
    <property type="entry name" value="RIBOSOMAL_L19"/>
    <property type="match status" value="1"/>
</dbReference>
<name>RL19_GLUOX</name>
<comment type="function">
    <text evidence="1">This protein is located at the 30S-50S ribosomal subunit interface and may play a role in the structure and function of the aminoacyl-tRNA binding site.</text>
</comment>
<comment type="similarity">
    <text evidence="1">Belongs to the bacterial ribosomal protein bL19 family.</text>
</comment>
<feature type="chain" id="PRO_0000163461" description="Large ribosomal subunit protein bL19">
    <location>
        <begin position="1"/>
        <end position="130"/>
    </location>
</feature>
<organism>
    <name type="scientific">Gluconobacter oxydans (strain 621H)</name>
    <name type="common">Gluconobacter suboxydans</name>
    <dbReference type="NCBI Taxonomy" id="290633"/>
    <lineage>
        <taxon>Bacteria</taxon>
        <taxon>Pseudomonadati</taxon>
        <taxon>Pseudomonadota</taxon>
        <taxon>Alphaproteobacteria</taxon>
        <taxon>Acetobacterales</taxon>
        <taxon>Acetobacteraceae</taxon>
        <taxon>Gluconobacter</taxon>
    </lineage>
</organism>
<proteinExistence type="inferred from homology"/>